<sequence>MIPVVALVGRPNVGKSTLFNRLTRTRDALVADFPGLTRDRKYGRAEVEGQEFIIIDTGGIDGTEDGVETHMAAQSLLAIEEADIVLFMVDARAGLMPADHAIAKHLRGREKATFLVANKTDGVDIDTAIAEFYSLGLGDIYSIAASHGRGVTQLIERVLLPFSGKGEEEVVELTEEEANAAYWAEQEQNEIEMVEEEEDFDPSTLPLKLAIVGKPNVGKSTLTNRILGEERVVVYDMPGTTRDSIYIPMERDGREYILIDTAGVRKRGKITETVEKFSVIKTLQAIEDANVVLLVIDAREGISDQDLSLLGFILNSGRSLVIAVNKWDGMSQEDKERVKEMLDYRLGFVDFARVHFISALHGSGVGNLFDSILEAYDCATRRVNTSLLTRIMHMAEEDHQPPMIRGRRVKMKYAHAGGYNPPIVVIHGNQVTDLPDSYKRYLMNYFRRSLKVMGTPIRIQFKEGANPYADKRNTLTPNQMRKRKRLMAHLKKR</sequence>
<keyword id="KW-0342">GTP-binding</keyword>
<keyword id="KW-0547">Nucleotide-binding</keyword>
<keyword id="KW-1185">Reference proteome</keyword>
<keyword id="KW-0677">Repeat</keyword>
<keyword id="KW-0690">Ribosome biogenesis</keyword>
<proteinExistence type="inferred from homology"/>
<reference key="1">
    <citation type="journal article" date="2003" name="Nat. Biotechnol.">
        <title>The genome sequence of the entomopathogenic bacterium Photorhabdus luminescens.</title>
        <authorList>
            <person name="Duchaud E."/>
            <person name="Rusniok C."/>
            <person name="Frangeul L."/>
            <person name="Buchrieser C."/>
            <person name="Givaudan A."/>
            <person name="Taourit S."/>
            <person name="Bocs S."/>
            <person name="Boursaux-Eude C."/>
            <person name="Chandler M."/>
            <person name="Charles J.-F."/>
            <person name="Dassa E."/>
            <person name="Derose R."/>
            <person name="Derzelle S."/>
            <person name="Freyssinet G."/>
            <person name="Gaudriault S."/>
            <person name="Medigue C."/>
            <person name="Lanois A."/>
            <person name="Powell K."/>
            <person name="Siguier P."/>
            <person name="Vincent R."/>
            <person name="Wingate V."/>
            <person name="Zouine M."/>
            <person name="Glaser P."/>
            <person name="Boemare N."/>
            <person name="Danchin A."/>
            <person name="Kunst F."/>
        </authorList>
    </citation>
    <scope>NUCLEOTIDE SEQUENCE [LARGE SCALE GENOMIC DNA]</scope>
    <source>
        <strain>DSM 15139 / CIP 105565 / TT01</strain>
    </source>
</reference>
<dbReference type="EMBL" id="BX571863">
    <property type="protein sequence ID" value="CAE13673.1"/>
    <property type="molecule type" value="Genomic_DNA"/>
</dbReference>
<dbReference type="RefSeq" id="WP_011145688.1">
    <property type="nucleotide sequence ID" value="NC_005126.1"/>
</dbReference>
<dbReference type="SMR" id="Q7N702"/>
<dbReference type="STRING" id="243265.plu1380"/>
<dbReference type="GeneID" id="48847659"/>
<dbReference type="KEGG" id="plu:plu1380"/>
<dbReference type="eggNOG" id="COG1160">
    <property type="taxonomic scope" value="Bacteria"/>
</dbReference>
<dbReference type="HOGENOM" id="CLU_016077_6_2_6"/>
<dbReference type="OrthoDB" id="9805918at2"/>
<dbReference type="Proteomes" id="UP000002514">
    <property type="component" value="Chromosome"/>
</dbReference>
<dbReference type="GO" id="GO:0005525">
    <property type="term" value="F:GTP binding"/>
    <property type="evidence" value="ECO:0007669"/>
    <property type="project" value="UniProtKB-UniRule"/>
</dbReference>
<dbReference type="GO" id="GO:0043022">
    <property type="term" value="F:ribosome binding"/>
    <property type="evidence" value="ECO:0007669"/>
    <property type="project" value="TreeGrafter"/>
</dbReference>
<dbReference type="GO" id="GO:0042254">
    <property type="term" value="P:ribosome biogenesis"/>
    <property type="evidence" value="ECO:0007669"/>
    <property type="project" value="UniProtKB-KW"/>
</dbReference>
<dbReference type="CDD" id="cd01894">
    <property type="entry name" value="EngA1"/>
    <property type="match status" value="1"/>
</dbReference>
<dbReference type="CDD" id="cd01895">
    <property type="entry name" value="EngA2"/>
    <property type="match status" value="1"/>
</dbReference>
<dbReference type="FunFam" id="3.30.300.20:FF:000004">
    <property type="entry name" value="GTPase Der"/>
    <property type="match status" value="1"/>
</dbReference>
<dbReference type="FunFam" id="3.40.50.300:FF:000040">
    <property type="entry name" value="GTPase Der"/>
    <property type="match status" value="1"/>
</dbReference>
<dbReference type="FunFam" id="3.40.50.300:FF:000057">
    <property type="entry name" value="GTPase Der"/>
    <property type="match status" value="1"/>
</dbReference>
<dbReference type="Gene3D" id="3.30.300.20">
    <property type="match status" value="1"/>
</dbReference>
<dbReference type="Gene3D" id="3.40.50.300">
    <property type="entry name" value="P-loop containing nucleotide triphosphate hydrolases"/>
    <property type="match status" value="2"/>
</dbReference>
<dbReference type="HAMAP" id="MF_00195">
    <property type="entry name" value="GTPase_Der"/>
    <property type="match status" value="1"/>
</dbReference>
<dbReference type="InterPro" id="IPR031166">
    <property type="entry name" value="G_ENGA"/>
</dbReference>
<dbReference type="InterPro" id="IPR006073">
    <property type="entry name" value="GTP-bd"/>
</dbReference>
<dbReference type="InterPro" id="IPR016484">
    <property type="entry name" value="GTPase_Der"/>
</dbReference>
<dbReference type="InterPro" id="IPR032859">
    <property type="entry name" value="KH_dom-like"/>
</dbReference>
<dbReference type="InterPro" id="IPR015946">
    <property type="entry name" value="KH_dom-like_a/b"/>
</dbReference>
<dbReference type="InterPro" id="IPR027417">
    <property type="entry name" value="P-loop_NTPase"/>
</dbReference>
<dbReference type="InterPro" id="IPR005225">
    <property type="entry name" value="Small_GTP-bd"/>
</dbReference>
<dbReference type="NCBIfam" id="TIGR03594">
    <property type="entry name" value="GTPase_EngA"/>
    <property type="match status" value="1"/>
</dbReference>
<dbReference type="NCBIfam" id="TIGR00231">
    <property type="entry name" value="small_GTP"/>
    <property type="match status" value="2"/>
</dbReference>
<dbReference type="PANTHER" id="PTHR43834">
    <property type="entry name" value="GTPASE DER"/>
    <property type="match status" value="1"/>
</dbReference>
<dbReference type="PANTHER" id="PTHR43834:SF6">
    <property type="entry name" value="GTPASE DER"/>
    <property type="match status" value="1"/>
</dbReference>
<dbReference type="Pfam" id="PF14714">
    <property type="entry name" value="KH_dom-like"/>
    <property type="match status" value="1"/>
</dbReference>
<dbReference type="Pfam" id="PF01926">
    <property type="entry name" value="MMR_HSR1"/>
    <property type="match status" value="2"/>
</dbReference>
<dbReference type="PIRSF" id="PIRSF006485">
    <property type="entry name" value="GTP-binding_EngA"/>
    <property type="match status" value="1"/>
</dbReference>
<dbReference type="PRINTS" id="PR00326">
    <property type="entry name" value="GTP1OBG"/>
</dbReference>
<dbReference type="SUPFAM" id="SSF52540">
    <property type="entry name" value="P-loop containing nucleoside triphosphate hydrolases"/>
    <property type="match status" value="2"/>
</dbReference>
<dbReference type="PROSITE" id="PS51712">
    <property type="entry name" value="G_ENGA"/>
    <property type="match status" value="2"/>
</dbReference>
<comment type="function">
    <text evidence="1">GTPase that plays an essential role in the late steps of ribosome biogenesis.</text>
</comment>
<comment type="subunit">
    <text evidence="1">Associates with the 50S ribosomal subunit.</text>
</comment>
<comment type="similarity">
    <text evidence="1">Belongs to the TRAFAC class TrmE-Era-EngA-EngB-Septin-like GTPase superfamily. EngA (Der) GTPase family.</text>
</comment>
<name>DER_PHOLL</name>
<accession>Q7N702</accession>
<feature type="chain" id="PRO_0000179025" description="GTPase Der">
    <location>
        <begin position="1"/>
        <end position="493"/>
    </location>
</feature>
<feature type="domain" description="EngA-type G 1">
    <location>
        <begin position="3"/>
        <end position="166"/>
    </location>
</feature>
<feature type="domain" description="EngA-type G 2">
    <location>
        <begin position="207"/>
        <end position="380"/>
    </location>
</feature>
<feature type="domain" description="KH-like" evidence="1">
    <location>
        <begin position="381"/>
        <end position="465"/>
    </location>
</feature>
<feature type="binding site" evidence="1">
    <location>
        <begin position="9"/>
        <end position="16"/>
    </location>
    <ligand>
        <name>GTP</name>
        <dbReference type="ChEBI" id="CHEBI:37565"/>
        <label>1</label>
    </ligand>
</feature>
<feature type="binding site" evidence="1">
    <location>
        <begin position="56"/>
        <end position="60"/>
    </location>
    <ligand>
        <name>GTP</name>
        <dbReference type="ChEBI" id="CHEBI:37565"/>
        <label>1</label>
    </ligand>
</feature>
<feature type="binding site" evidence="1">
    <location>
        <begin position="118"/>
        <end position="121"/>
    </location>
    <ligand>
        <name>GTP</name>
        <dbReference type="ChEBI" id="CHEBI:37565"/>
        <label>1</label>
    </ligand>
</feature>
<feature type="binding site" evidence="1">
    <location>
        <begin position="213"/>
        <end position="220"/>
    </location>
    <ligand>
        <name>GTP</name>
        <dbReference type="ChEBI" id="CHEBI:37565"/>
        <label>2</label>
    </ligand>
</feature>
<feature type="binding site" evidence="1">
    <location>
        <begin position="260"/>
        <end position="264"/>
    </location>
    <ligand>
        <name>GTP</name>
        <dbReference type="ChEBI" id="CHEBI:37565"/>
        <label>2</label>
    </ligand>
</feature>
<feature type="binding site" evidence="1">
    <location>
        <begin position="325"/>
        <end position="328"/>
    </location>
    <ligand>
        <name>GTP</name>
        <dbReference type="ChEBI" id="CHEBI:37565"/>
        <label>2</label>
    </ligand>
</feature>
<organism>
    <name type="scientific">Photorhabdus laumondii subsp. laumondii (strain DSM 15139 / CIP 105565 / TT01)</name>
    <name type="common">Photorhabdus luminescens subsp. laumondii</name>
    <dbReference type="NCBI Taxonomy" id="243265"/>
    <lineage>
        <taxon>Bacteria</taxon>
        <taxon>Pseudomonadati</taxon>
        <taxon>Pseudomonadota</taxon>
        <taxon>Gammaproteobacteria</taxon>
        <taxon>Enterobacterales</taxon>
        <taxon>Morganellaceae</taxon>
        <taxon>Photorhabdus</taxon>
    </lineage>
</organism>
<evidence type="ECO:0000255" key="1">
    <source>
        <dbReference type="HAMAP-Rule" id="MF_00195"/>
    </source>
</evidence>
<protein>
    <recommendedName>
        <fullName evidence="1">GTPase Der</fullName>
    </recommendedName>
    <alternativeName>
        <fullName evidence="1">GTP-binding protein EngA</fullName>
    </alternativeName>
</protein>
<gene>
    <name evidence="1" type="primary">der</name>
    <name type="synonym">engA</name>
    <name type="ordered locus">plu1380</name>
</gene>